<sequence length="261" mass="29863">MTHQTHAYHMVNPSPWPLTGALSALLMTSGLAMWFHFNSTILLMIGLTTNTLTMYQWWRDVIRESTFQGHHTPTVQKGLRYGMILFIISEVLFFTGFFWAFYHSSLAPTPELGGCWPPTGIHPLNPLEVPLLNTSVLLASGVSITWAHHSLMEGNRYPMLQALFITIALGVYFTLLQASEYYEAPFTISDGIYGSTFFVATGFHGLHVIIGSTFLIVCFFRQLKFHFTSNHHFGFEAAAWYWHFVDVVWLFLYVSIYWWGS</sequence>
<gene>
    <name type="primary">MT-CO3</name>
    <name type="synonym">COIII</name>
    <name type="synonym">COXIII</name>
    <name type="synonym">MTCO3</name>
</gene>
<evidence type="ECO:0000250" key="1">
    <source>
        <dbReference type="UniProtKB" id="P00415"/>
    </source>
</evidence>
<evidence type="ECO:0000250" key="2">
    <source>
        <dbReference type="UniProtKB" id="P00420"/>
    </source>
</evidence>
<evidence type="ECO:0000305" key="3"/>
<comment type="function">
    <text evidence="2">Component of the cytochrome c oxidase, the last enzyme in the mitochondrial electron transport chain which drives oxidative phosphorylation. The respiratory chain contains 3 multisubunit complexes succinate dehydrogenase (complex II, CII), ubiquinol-cytochrome c oxidoreductase (cytochrome b-c1 complex, complex III, CIII) and cytochrome c oxidase (complex IV, CIV), that cooperate to transfer electrons derived from NADH and succinate to molecular oxygen, creating an electrochemical gradient over the inner membrane that drives transmembrane transport and the ATP synthase. Cytochrome c oxidase is the component of the respiratory chain that catalyzes the reduction of oxygen to water. Electrons originating from reduced cytochrome c in the intermembrane space (IMS) are transferred via the dinuclear copper A center (CU(A)) of subunit 2 and heme A of subunit 1 to the active site in subunit 1, a binuclear center (BNC) formed by heme A3 and copper B (CU(B)). The BNC reduces molecular oxygen to 2 water molecules using 4 electrons from cytochrome c in the IMS and 4 protons from the mitochondrial matrix.</text>
</comment>
<comment type="catalytic activity">
    <reaction evidence="2">
        <text>4 Fe(II)-[cytochrome c] + O2 + 8 H(+)(in) = 4 Fe(III)-[cytochrome c] + 2 H2O + 4 H(+)(out)</text>
        <dbReference type="Rhea" id="RHEA:11436"/>
        <dbReference type="Rhea" id="RHEA-COMP:10350"/>
        <dbReference type="Rhea" id="RHEA-COMP:14399"/>
        <dbReference type="ChEBI" id="CHEBI:15377"/>
        <dbReference type="ChEBI" id="CHEBI:15378"/>
        <dbReference type="ChEBI" id="CHEBI:15379"/>
        <dbReference type="ChEBI" id="CHEBI:29033"/>
        <dbReference type="ChEBI" id="CHEBI:29034"/>
        <dbReference type="EC" id="7.1.1.9"/>
    </reaction>
    <physiologicalReaction direction="left-to-right" evidence="2">
        <dbReference type="Rhea" id="RHEA:11437"/>
    </physiologicalReaction>
</comment>
<comment type="subunit">
    <text evidence="1">Component of the cytochrome c oxidase (complex IV, CIV), a multisubunit enzyme composed of 14 subunits. The complex is composed of a catalytic core of 3 subunits MT-CO1, MT-CO2 and MT-CO3, encoded in the mitochondrial DNA, and 11 supernumerary subunits COX4I, COX5A, COX5B, COX6A, COX6B, COX6C, COX7A, COX7B, COX7C, COX8 and NDUFA4, which are encoded in the nuclear genome. The complex exists as a monomer or a dimer and forms supercomplexes (SCs) in the inner mitochondrial membrane with NADH-ubiquinone oxidoreductase (complex I, CI) and ubiquinol-cytochrome c oxidoreductase (cytochrome b-c1 complex, complex III, CIII), resulting in different assemblies (supercomplex SCI(1)III(2)IV(1) and megacomplex MCI(2)III(2)IV(2)).</text>
</comment>
<comment type="subcellular location">
    <subcellularLocation>
        <location evidence="1">Mitochondrion inner membrane</location>
        <topology evidence="1">Multi-pass membrane protein</topology>
    </subcellularLocation>
</comment>
<comment type="similarity">
    <text evidence="3">Belongs to the cytochrome c oxidase subunit 3 family.</text>
</comment>
<proteinExistence type="inferred from homology"/>
<accession>O47697</accession>
<geneLocation type="mitochondrion"/>
<feature type="chain" id="PRO_0000183843" description="Cytochrome c oxidase subunit 3">
    <location>
        <begin position="1"/>
        <end position="261"/>
    </location>
</feature>
<feature type="topological domain" description="Mitochondrial matrix" evidence="1">
    <location>
        <begin position="1"/>
        <end position="15"/>
    </location>
</feature>
<feature type="transmembrane region" description="Helical; Name=I" evidence="1">
    <location>
        <begin position="16"/>
        <end position="34"/>
    </location>
</feature>
<feature type="topological domain" description="Mitochondrial intermembrane" evidence="1">
    <location>
        <begin position="35"/>
        <end position="40"/>
    </location>
</feature>
<feature type="transmembrane region" description="Helical; Name=II" evidence="1">
    <location>
        <begin position="41"/>
        <end position="66"/>
    </location>
</feature>
<feature type="topological domain" description="Mitochondrial matrix" evidence="1">
    <location>
        <begin position="67"/>
        <end position="72"/>
    </location>
</feature>
<feature type="transmembrane region" description="Helical; Name=III" evidence="1">
    <location>
        <begin position="73"/>
        <end position="105"/>
    </location>
</feature>
<feature type="topological domain" description="Mitochondrial intermembrane" evidence="1">
    <location>
        <begin position="106"/>
        <end position="128"/>
    </location>
</feature>
<feature type="transmembrane region" description="Helical; Name=IV" evidence="1">
    <location>
        <begin position="129"/>
        <end position="152"/>
    </location>
</feature>
<feature type="topological domain" description="Mitochondrial matrix" evidence="1">
    <location>
        <begin position="153"/>
        <end position="155"/>
    </location>
</feature>
<feature type="transmembrane region" description="Helical; Name=V" evidence="1">
    <location>
        <begin position="156"/>
        <end position="183"/>
    </location>
</feature>
<feature type="topological domain" description="Mitochondrial intermembrane" evidence="1">
    <location>
        <begin position="184"/>
        <end position="190"/>
    </location>
</feature>
<feature type="transmembrane region" description="Helical; Name=VI" evidence="1">
    <location>
        <begin position="191"/>
        <end position="223"/>
    </location>
</feature>
<feature type="topological domain" description="Mitochondrial matrix" evidence="1">
    <location>
        <begin position="224"/>
        <end position="232"/>
    </location>
</feature>
<feature type="transmembrane region" description="Helical; Name=VII" evidence="1">
    <location>
        <begin position="233"/>
        <end position="256"/>
    </location>
</feature>
<feature type="topological domain" description="Mitochondrial intermembrane" evidence="1">
    <location>
        <begin position="257"/>
        <end position="261"/>
    </location>
</feature>
<dbReference type="EC" id="7.1.1.9"/>
<dbReference type="EMBL" id="AF030462">
    <property type="protein sequence ID" value="AAB93601.1"/>
    <property type="molecule type" value="Genomic_DNA"/>
</dbReference>
<dbReference type="SMR" id="O47697"/>
<dbReference type="GO" id="GO:0005743">
    <property type="term" value="C:mitochondrial inner membrane"/>
    <property type="evidence" value="ECO:0007669"/>
    <property type="project" value="UniProtKB-SubCell"/>
</dbReference>
<dbReference type="GO" id="GO:0045277">
    <property type="term" value="C:respiratory chain complex IV"/>
    <property type="evidence" value="ECO:0000250"/>
    <property type="project" value="UniProtKB"/>
</dbReference>
<dbReference type="GO" id="GO:0004129">
    <property type="term" value="F:cytochrome-c oxidase activity"/>
    <property type="evidence" value="ECO:0007669"/>
    <property type="project" value="UniProtKB-EC"/>
</dbReference>
<dbReference type="GO" id="GO:0006123">
    <property type="term" value="P:mitochondrial electron transport, cytochrome c to oxygen"/>
    <property type="evidence" value="ECO:0007669"/>
    <property type="project" value="TreeGrafter"/>
</dbReference>
<dbReference type="GO" id="GO:0008535">
    <property type="term" value="P:respiratory chain complex IV assembly"/>
    <property type="evidence" value="ECO:0000250"/>
    <property type="project" value="UniProtKB"/>
</dbReference>
<dbReference type="CDD" id="cd01665">
    <property type="entry name" value="Cyt_c_Oxidase_III"/>
    <property type="match status" value="1"/>
</dbReference>
<dbReference type="FunFam" id="1.10.287.70:FF:000048">
    <property type="entry name" value="Cytochrome c oxidase subunit 3"/>
    <property type="match status" value="1"/>
</dbReference>
<dbReference type="FunFam" id="1.20.120.80:FF:000002">
    <property type="entry name" value="Cytochrome c oxidase subunit 3"/>
    <property type="match status" value="1"/>
</dbReference>
<dbReference type="Gene3D" id="1.10.287.70">
    <property type="match status" value="1"/>
</dbReference>
<dbReference type="Gene3D" id="1.20.120.80">
    <property type="entry name" value="Cytochrome c oxidase, subunit III, four-helix bundle"/>
    <property type="match status" value="1"/>
</dbReference>
<dbReference type="InterPro" id="IPR024791">
    <property type="entry name" value="Cyt_c/ubiquinol_Oxase_su3"/>
</dbReference>
<dbReference type="InterPro" id="IPR033945">
    <property type="entry name" value="Cyt_c_oxase_su3_dom"/>
</dbReference>
<dbReference type="InterPro" id="IPR000298">
    <property type="entry name" value="Cyt_c_oxidase-like_su3"/>
</dbReference>
<dbReference type="InterPro" id="IPR035973">
    <property type="entry name" value="Cyt_c_oxidase_su3-like_sf"/>
</dbReference>
<dbReference type="InterPro" id="IPR013833">
    <property type="entry name" value="Cyt_c_oxidase_su3_a-hlx"/>
</dbReference>
<dbReference type="PANTHER" id="PTHR11403:SF7">
    <property type="entry name" value="CYTOCHROME C OXIDASE SUBUNIT 3"/>
    <property type="match status" value="1"/>
</dbReference>
<dbReference type="PANTHER" id="PTHR11403">
    <property type="entry name" value="CYTOCHROME C OXIDASE SUBUNIT III"/>
    <property type="match status" value="1"/>
</dbReference>
<dbReference type="Pfam" id="PF00510">
    <property type="entry name" value="COX3"/>
    <property type="match status" value="1"/>
</dbReference>
<dbReference type="SUPFAM" id="SSF81452">
    <property type="entry name" value="Cytochrome c oxidase subunit III-like"/>
    <property type="match status" value="1"/>
</dbReference>
<dbReference type="PROSITE" id="PS50253">
    <property type="entry name" value="COX3"/>
    <property type="match status" value="1"/>
</dbReference>
<keyword id="KW-0472">Membrane</keyword>
<keyword id="KW-0496">Mitochondrion</keyword>
<keyword id="KW-0999">Mitochondrion inner membrane</keyword>
<keyword id="KW-1278">Translocase</keyword>
<keyword id="KW-0812">Transmembrane</keyword>
<keyword id="KW-1133">Transmembrane helix</keyword>
<reference key="1">
    <citation type="journal article" date="1999" name="Mol. Phylogenet. Evol.">
        <title>Phylogenetic relationships in the bovid subfamily Antilopinae based on mitochondrial DNA sequences.</title>
        <authorList>
            <person name="Rebholz W.E.R."/>
            <person name="Harley E.H."/>
        </authorList>
    </citation>
    <scope>NUCLEOTIDE SEQUENCE [GENOMIC DNA]</scope>
</reference>
<name>COX3_RAPME</name>
<organism>
    <name type="scientific">Raphicerus melanotis</name>
    <name type="common">Cape grysbok</name>
    <dbReference type="NCBI Taxonomy" id="66435"/>
    <lineage>
        <taxon>Eukaryota</taxon>
        <taxon>Metazoa</taxon>
        <taxon>Chordata</taxon>
        <taxon>Craniata</taxon>
        <taxon>Vertebrata</taxon>
        <taxon>Euteleostomi</taxon>
        <taxon>Mammalia</taxon>
        <taxon>Eutheria</taxon>
        <taxon>Laurasiatheria</taxon>
        <taxon>Artiodactyla</taxon>
        <taxon>Ruminantia</taxon>
        <taxon>Pecora</taxon>
        <taxon>Bovidae</taxon>
        <taxon>Antilopinae</taxon>
        <taxon>Raphicerus</taxon>
    </lineage>
</organism>
<protein>
    <recommendedName>
        <fullName>Cytochrome c oxidase subunit 3</fullName>
        <ecNumber>7.1.1.9</ecNumber>
    </recommendedName>
    <alternativeName>
        <fullName>Cytochrome c oxidase polypeptide III</fullName>
    </alternativeName>
</protein>